<keyword id="KW-0903">Direct protein sequencing</keyword>
<keyword id="KW-1185">Reference proteome</keyword>
<keyword id="KW-0687">Ribonucleoprotein</keyword>
<keyword id="KW-0689">Ribosomal protein</keyword>
<gene>
    <name type="primary">rps6e</name>
    <name type="ordered locus">rrnAC2212</name>
</gene>
<proteinExistence type="evidence at protein level"/>
<protein>
    <recommendedName>
        <fullName evidence="3">Small ribosomal subunit protein eS6</fullName>
    </recommendedName>
    <alternativeName>
        <fullName>30S ribosomal protein S6e</fullName>
    </alternativeName>
    <alternativeName>
        <fullName>HS13</fullName>
    </alternativeName>
</protein>
<feature type="initiator methionine" description="Removed" evidence="2">
    <location>
        <position position="1"/>
    </location>
</feature>
<feature type="chain" id="PRO_0000137345" description="Small ribosomal subunit protein eS6">
    <location>
        <begin position="2"/>
        <end position="129"/>
    </location>
</feature>
<feature type="region of interest" description="Disordered" evidence="1">
    <location>
        <begin position="53"/>
        <end position="88"/>
    </location>
</feature>
<feature type="sequence conflict" description="In Ref. 2; AA sequence." evidence="3" ref="2">
    <original>HTY</original>
    <variation>GTYDGIDMIGDYIGEF</variation>
    <location>
        <begin position="15"/>
        <end position="17"/>
    </location>
</feature>
<feature type="sequence conflict" description="In Ref. 2; AA sequence." evidence="3" ref="2">
    <original>V</original>
    <variation>VV</variation>
    <location>
        <position position="43"/>
    </location>
</feature>
<feature type="sequence conflict" description="In Ref. 2; AA sequence." evidence="3" ref="2">
    <location>
        <position position="48"/>
    </location>
</feature>
<feature type="sequence conflict" description="In Ref. 2; AA sequence." evidence="3" ref="2">
    <location>
        <begin position="90"/>
        <end position="92"/>
    </location>
</feature>
<feature type="sequence conflict" description="In Ref. 2; AA sequence." evidence="3" ref="2">
    <location>
        <position position="121"/>
    </location>
</feature>
<feature type="sequence conflict" description="In Ref. 2; AA sequence." evidence="3" ref="2">
    <original>DDDE</original>
    <variation>LD</variation>
    <location>
        <begin position="126"/>
        <end position="129"/>
    </location>
</feature>
<evidence type="ECO:0000256" key="1">
    <source>
        <dbReference type="SAM" id="MobiDB-lite"/>
    </source>
</evidence>
<evidence type="ECO:0000269" key="2">
    <source>
    </source>
</evidence>
<evidence type="ECO:0000305" key="3"/>
<sequence>MAEFTVAVSDPEDGHTYQIDVDGQDANRFIGRELGDEVDGGAVGLDGYSLELTGGSDTSGRPMRPDVRGVTTKEIMSDGGVGFEPTTDGERKRITVRGREVSDDTRQINAKITARGSDDVADLLGDDDE</sequence>
<name>RS6E_HALMA</name>
<organism>
    <name type="scientific">Haloarcula marismortui (strain ATCC 43049 / DSM 3752 / JCM 8966 / VKM B-1809)</name>
    <name type="common">Halobacterium marismortui</name>
    <dbReference type="NCBI Taxonomy" id="272569"/>
    <lineage>
        <taxon>Archaea</taxon>
        <taxon>Methanobacteriati</taxon>
        <taxon>Methanobacteriota</taxon>
        <taxon>Stenosarchaea group</taxon>
        <taxon>Halobacteria</taxon>
        <taxon>Halobacteriales</taxon>
        <taxon>Haloarculaceae</taxon>
        <taxon>Haloarcula</taxon>
    </lineage>
</organism>
<dbReference type="EMBL" id="AY596297">
    <property type="protein sequence ID" value="AAV47046.1"/>
    <property type="molecule type" value="Genomic_DNA"/>
</dbReference>
<dbReference type="PIR" id="S11593">
    <property type="entry name" value="R3HS13"/>
</dbReference>
<dbReference type="RefSeq" id="WP_007189320.1">
    <property type="nucleotide sequence ID" value="NZ_CP039138.1"/>
</dbReference>
<dbReference type="SMR" id="P21509"/>
<dbReference type="STRING" id="272569.rrnAC2212"/>
<dbReference type="PaxDb" id="272569-rrnAC2212"/>
<dbReference type="EnsemblBacteria" id="AAV47046">
    <property type="protein sequence ID" value="AAV47046"/>
    <property type="gene ID" value="rrnAC2212"/>
</dbReference>
<dbReference type="KEGG" id="hma:rrnAC2212"/>
<dbReference type="PATRIC" id="fig|272569.17.peg.2844"/>
<dbReference type="eggNOG" id="arCOG01946">
    <property type="taxonomic scope" value="Archaea"/>
</dbReference>
<dbReference type="HOGENOM" id="CLU_109671_1_1_2"/>
<dbReference type="Proteomes" id="UP000001169">
    <property type="component" value="Chromosome I"/>
</dbReference>
<dbReference type="GO" id="GO:1990904">
    <property type="term" value="C:ribonucleoprotein complex"/>
    <property type="evidence" value="ECO:0007669"/>
    <property type="project" value="UniProtKB-KW"/>
</dbReference>
<dbReference type="GO" id="GO:0005840">
    <property type="term" value="C:ribosome"/>
    <property type="evidence" value="ECO:0007669"/>
    <property type="project" value="UniProtKB-KW"/>
</dbReference>
<dbReference type="GO" id="GO:0003735">
    <property type="term" value="F:structural constituent of ribosome"/>
    <property type="evidence" value="ECO:0007669"/>
    <property type="project" value="InterPro"/>
</dbReference>
<dbReference type="GO" id="GO:0006412">
    <property type="term" value="P:translation"/>
    <property type="evidence" value="ECO:0007669"/>
    <property type="project" value="UniProtKB-UniRule"/>
</dbReference>
<dbReference type="HAMAP" id="MF_00512">
    <property type="entry name" value="Ribosomal_eS6"/>
    <property type="match status" value="1"/>
</dbReference>
<dbReference type="InterPro" id="IPR001377">
    <property type="entry name" value="Ribosomal_eS6"/>
</dbReference>
<dbReference type="InterPro" id="IPR020924">
    <property type="entry name" value="Ribosomal_eS6_arc"/>
</dbReference>
<dbReference type="InterPro" id="IPR018282">
    <property type="entry name" value="Ribosomal_eS6_CS"/>
</dbReference>
<dbReference type="NCBIfam" id="NF003294">
    <property type="entry name" value="PRK04290.1-3"/>
    <property type="match status" value="1"/>
</dbReference>
<dbReference type="PANTHER" id="PTHR11502">
    <property type="entry name" value="40S RIBOSOMAL PROTEIN S6"/>
    <property type="match status" value="1"/>
</dbReference>
<dbReference type="Pfam" id="PF01092">
    <property type="entry name" value="Ribosomal_S6e"/>
    <property type="match status" value="1"/>
</dbReference>
<dbReference type="SMART" id="SM01405">
    <property type="entry name" value="Ribosomal_S6e"/>
    <property type="match status" value="1"/>
</dbReference>
<dbReference type="PROSITE" id="PS00578">
    <property type="entry name" value="RIBOSOMAL_S6E"/>
    <property type="match status" value="1"/>
</dbReference>
<accession>P21509</accession>
<accession>Q5V0A7</accession>
<reference key="1">
    <citation type="journal article" date="2004" name="Genome Res.">
        <title>Genome sequence of Haloarcula marismortui: a halophilic archaeon from the Dead Sea.</title>
        <authorList>
            <person name="Baliga N.S."/>
            <person name="Bonneau R."/>
            <person name="Facciotti M.T."/>
            <person name="Pan M."/>
            <person name="Glusman G."/>
            <person name="Deutsch E.W."/>
            <person name="Shannon P."/>
            <person name="Chiu Y."/>
            <person name="Weng R.S."/>
            <person name="Gan R.R."/>
            <person name="Hung P."/>
            <person name="Date S.V."/>
            <person name="Marcotte E."/>
            <person name="Hood L."/>
            <person name="Ng W.V."/>
        </authorList>
    </citation>
    <scope>NUCLEOTIDE SEQUENCE [LARGE SCALE GENOMIC DNA]</scope>
    <source>
        <strain>ATCC 43049 / DSM 3752 / JCM 8966 / VKM B-1809</strain>
    </source>
</reference>
<reference key="2">
    <citation type="journal article" date="1989" name="Can. J. Microbiol.">
        <title>Ribosomal proteins in halobacteria.</title>
        <authorList>
            <person name="Kimura M."/>
            <person name="Arndt E."/>
            <person name="Hatakeyama T."/>
            <person name="Hatakeyama T."/>
            <person name="Kimura J."/>
        </authorList>
    </citation>
    <scope>PROTEIN SEQUENCE OF 2-129</scope>
</reference>
<comment type="similarity">
    <text evidence="3">Belongs to the eukaryotic ribosomal protein eS6 family.</text>
</comment>